<comment type="subcellular location">
    <subcellularLocation>
        <location>Secreted</location>
    </subcellularLocation>
</comment>
<comment type="tissue specificity">
    <text>Expressed by the venom gland.</text>
</comment>
<accession>Q7M3V1</accession>
<accession>B6VQ30</accession>
<sequence length="246" mass="26029">MAGKEVIFIMALFIAVESSPIFSFDDLVCPSVTSLRVNVEKNECSTKKDCGRNLCCENQNKINVCVGGIMPLPKPNLDVNNIGGAVSESVKQKRETAESLSGSFDKEKASAENLSGSFDQQKSSVDEKSGSVGQQKGAVEGQSGSGEQRRETAESQSGSVDQEKASAENLSGSIDKQKVTVEEKSEPAQGQSGSVKQKRKTTENVSGSLDQEKASAESLSGSFDQQKSSVDEKSGSVGNDDDISVQ</sequence>
<evidence type="ECO:0000256" key="1">
    <source>
        <dbReference type="SAM" id="MobiDB-lite"/>
    </source>
</evidence>
<evidence type="ECO:0000269" key="2">
    <source>
    </source>
</evidence>
<organism>
    <name type="scientific">Chelonus sp. nr. curvimaculatus</name>
    <name type="common">Parasitic wasp</name>
    <dbReference type="NCBI Taxonomy" id="132888"/>
    <lineage>
        <taxon>Eukaryota</taxon>
        <taxon>Metazoa</taxon>
        <taxon>Ecdysozoa</taxon>
        <taxon>Arthropoda</taxon>
        <taxon>Hexapoda</taxon>
        <taxon>Insecta</taxon>
        <taxon>Pterygota</taxon>
        <taxon>Neoptera</taxon>
        <taxon>Endopterygota</taxon>
        <taxon>Hymenoptera</taxon>
        <taxon>Apocrita</taxon>
        <taxon>Ichneumonoidea</taxon>
        <taxon>Braconidae</taxon>
        <taxon>Cheloninae</taxon>
        <taxon>Chelonus</taxon>
    </lineage>
</organism>
<dbReference type="EMBL" id="M92086">
    <property type="protein sequence ID" value="ACI70208.1"/>
    <property type="molecule type" value="mRNA"/>
</dbReference>
<dbReference type="PIR" id="A42876">
    <property type="entry name" value="A42876"/>
</dbReference>
<dbReference type="SMR" id="Q7M3V1"/>
<dbReference type="GO" id="GO:0005576">
    <property type="term" value="C:extracellular region"/>
    <property type="evidence" value="ECO:0007669"/>
    <property type="project" value="UniProtKB-SubCell"/>
</dbReference>
<proteinExistence type="evidence at protein level"/>
<protein>
    <recommendedName>
        <fullName>33kDa venom protein</fullName>
    </recommendedName>
</protein>
<keyword id="KW-0903">Direct protein sequencing</keyword>
<keyword id="KW-0677">Repeat</keyword>
<keyword id="KW-0964">Secreted</keyword>
<keyword id="KW-0732">Signal</keyword>
<name>33VP_CHENC</name>
<reference key="1">
    <citation type="journal article" date="1992" name="J. Biol. Chem.">
        <title>Sequence, structure, and expression of a wasp venom protein with a negatively charged signal peptide and a novel repeating internal structure.</title>
        <authorList>
            <person name="Jones D."/>
            <person name="Sawicki G."/>
            <person name="Wozniak M."/>
        </authorList>
    </citation>
    <scope>NUCLEOTIDE SEQUENCE [MRNA]</scope>
    <source>
        <tissue>Venom gland</tissue>
    </source>
</reference>
<reference key="2">
    <citation type="journal article" date="1990" name="Biochim. Biophys. Acta">
        <title>Isolation and characterization of the 32.5 kDa protein from the venom of an endoparasitic wasp.</title>
        <authorList>
            <person name="Taylor T."/>
            <person name="Jones D."/>
        </authorList>
    </citation>
    <scope>PROTEIN SEQUENCE OF 21-40</scope>
    <source>
        <tissue>Venom</tissue>
    </source>
</reference>
<feature type="signal peptide" evidence="2">
    <location>
        <begin position="1"/>
        <end position="20"/>
    </location>
</feature>
<feature type="chain" id="PRO_0000408021" description="33kDa venom protein">
    <location>
        <begin position="21"/>
        <end position="246"/>
    </location>
</feature>
<feature type="repeat" description="1">
    <location>
        <begin position="83"/>
        <end position="96"/>
    </location>
</feature>
<feature type="repeat" description="2">
    <location>
        <begin position="97"/>
        <end position="110"/>
    </location>
</feature>
<feature type="repeat" description="3">
    <location>
        <begin position="111"/>
        <end position="124"/>
    </location>
</feature>
<feature type="repeat" description="4">
    <location>
        <begin position="125"/>
        <end position="138"/>
    </location>
</feature>
<feature type="repeat" description="5">
    <location>
        <begin position="139"/>
        <end position="152"/>
    </location>
</feature>
<feature type="repeat" description="6">
    <location>
        <begin position="153"/>
        <end position="166"/>
    </location>
</feature>
<feature type="repeat" description="7">
    <location>
        <begin position="167"/>
        <end position="180"/>
    </location>
</feature>
<feature type="repeat" description="8; half-length">
    <location>
        <begin position="181"/>
        <end position="187"/>
    </location>
</feature>
<feature type="repeat" description="9">
    <location>
        <begin position="188"/>
        <end position="201"/>
    </location>
</feature>
<feature type="repeat" description="10">
    <location>
        <begin position="202"/>
        <end position="215"/>
    </location>
</feature>
<feature type="repeat" description="11">
    <location>
        <begin position="216"/>
        <end position="229"/>
    </location>
</feature>
<feature type="repeat" description="12">
    <location>
        <begin position="230"/>
        <end position="243"/>
    </location>
</feature>
<feature type="region of interest" description="12 X approximate tandem repeats of [AV][DE]X[VL]SGSX[DE]QX[KR]X[ST]">
    <location>
        <begin position="83"/>
        <end position="243"/>
    </location>
</feature>
<feature type="region of interest" description="Disordered" evidence="1">
    <location>
        <begin position="88"/>
        <end position="246"/>
    </location>
</feature>
<feature type="compositionally biased region" description="Polar residues" evidence="1">
    <location>
        <begin position="112"/>
        <end position="123"/>
    </location>
</feature>
<feature type="compositionally biased region" description="Basic and acidic residues" evidence="1">
    <location>
        <begin position="175"/>
        <end position="186"/>
    </location>
</feature>
<feature type="compositionally biased region" description="Polar residues" evidence="1">
    <location>
        <begin position="217"/>
        <end position="228"/>
    </location>
</feature>